<feature type="chain" id="PRO_0000138657" description="DNA double-strand break repair Rad50 ATPase">
    <location>
        <begin position="1"/>
        <end position="993"/>
    </location>
</feature>
<feature type="domain" description="Zinc-hook" evidence="1">
    <location>
        <begin position="452"/>
        <end position="556"/>
    </location>
</feature>
<feature type="coiled-coil region" evidence="1">
    <location>
        <begin position="192"/>
        <end position="222"/>
    </location>
</feature>
<feature type="coiled-coil region" evidence="1">
    <location>
        <begin position="402"/>
        <end position="493"/>
    </location>
</feature>
<feature type="coiled-coil region" evidence="1">
    <location>
        <begin position="570"/>
        <end position="612"/>
    </location>
</feature>
<feature type="coiled-coil region" evidence="1">
    <location>
        <begin position="646"/>
        <end position="677"/>
    </location>
</feature>
<feature type="coiled-coil region" evidence="1">
    <location>
        <begin position="702"/>
        <end position="731"/>
    </location>
</feature>
<feature type="binding site" evidence="1">
    <location>
        <position position="12"/>
    </location>
    <ligand>
        <name>ATP</name>
        <dbReference type="ChEBI" id="CHEBI:30616"/>
    </ligand>
</feature>
<feature type="binding site" evidence="1">
    <location>
        <begin position="32"/>
        <end position="38"/>
    </location>
    <ligand>
        <name>ATP</name>
        <dbReference type="ChEBI" id="CHEBI:30616"/>
    </ligand>
</feature>
<feature type="binding site" evidence="1">
    <location>
        <position position="133"/>
    </location>
    <ligand>
        <name>ATP</name>
        <dbReference type="ChEBI" id="CHEBI:30616"/>
    </ligand>
</feature>
<feature type="binding site" evidence="1">
    <location>
        <position position="497"/>
    </location>
    <ligand>
        <name>Zn(2+)</name>
        <dbReference type="ChEBI" id="CHEBI:29105"/>
    </ligand>
</feature>
<feature type="binding site" evidence="1">
    <location>
        <position position="500"/>
    </location>
    <ligand>
        <name>Zn(2+)</name>
        <dbReference type="ChEBI" id="CHEBI:29105"/>
    </ligand>
</feature>
<protein>
    <recommendedName>
        <fullName evidence="1">DNA double-strand break repair Rad50 ATPase</fullName>
    </recommendedName>
</protein>
<gene>
    <name evidence="1" type="primary">rad50</name>
    <name type="ordered locus">MMP1341</name>
</gene>
<keyword id="KW-0067">ATP-binding</keyword>
<keyword id="KW-0175">Coiled coil</keyword>
<keyword id="KW-0227">DNA damage</keyword>
<keyword id="KW-0234">DNA repair</keyword>
<keyword id="KW-0378">Hydrolase</keyword>
<keyword id="KW-0479">Metal-binding</keyword>
<keyword id="KW-0547">Nucleotide-binding</keyword>
<keyword id="KW-1185">Reference proteome</keyword>
<keyword id="KW-0862">Zinc</keyword>
<reference key="1">
    <citation type="journal article" date="2004" name="J. Bacteriol.">
        <title>Complete genome sequence of the genetically tractable hydrogenotrophic methanogen Methanococcus maripaludis.</title>
        <authorList>
            <person name="Hendrickson E.L."/>
            <person name="Kaul R."/>
            <person name="Zhou Y."/>
            <person name="Bovee D."/>
            <person name="Chapman P."/>
            <person name="Chung J."/>
            <person name="Conway de Macario E."/>
            <person name="Dodsworth J.A."/>
            <person name="Gillett W."/>
            <person name="Graham D.E."/>
            <person name="Hackett M."/>
            <person name="Haydock A.K."/>
            <person name="Kang A."/>
            <person name="Land M.L."/>
            <person name="Levy R."/>
            <person name="Lie T.J."/>
            <person name="Major T.A."/>
            <person name="Moore B.C."/>
            <person name="Porat I."/>
            <person name="Palmeiri A."/>
            <person name="Rouse G."/>
            <person name="Saenphimmachak C."/>
            <person name="Soell D."/>
            <person name="Van Dien S."/>
            <person name="Wang T."/>
            <person name="Whitman W.B."/>
            <person name="Xia Q."/>
            <person name="Zhang Y."/>
            <person name="Larimer F.W."/>
            <person name="Olson M.V."/>
            <person name="Leigh J.A."/>
        </authorList>
    </citation>
    <scope>NUCLEOTIDE SEQUENCE [LARGE SCALE GENOMIC DNA]</scope>
    <source>
        <strain>DSM 14266 / JCM 13030 / NBRC 101832 / S2 / LL</strain>
    </source>
</reference>
<evidence type="ECO:0000255" key="1">
    <source>
        <dbReference type="HAMAP-Rule" id="MF_00449"/>
    </source>
</evidence>
<comment type="function">
    <text evidence="1">Part of the Rad50/Mre11 complex, which is involved in the early steps of DNA double-strand break (DSB) repair. The complex may facilitate opening of the processed DNA ends to aid in the recruitment of HerA and NurA. Rad50 controls the balance between DNA end bridging and DNA resection via ATP-dependent structural rearrangements of the Rad50/Mre11 complex.</text>
</comment>
<comment type="cofactor">
    <cofactor evidence="1">
        <name>Zn(2+)</name>
        <dbReference type="ChEBI" id="CHEBI:29105"/>
    </cofactor>
    <text evidence="1">Binds 1 zinc ion per homodimer.</text>
</comment>
<comment type="subunit">
    <text evidence="1">Homodimer. Forms a heterotetramer composed of two Mre11 subunits and two Rad50 subunits.</text>
</comment>
<comment type="domain">
    <text evidence="1">The two conserved Cys that bind zinc constitute the zinc-hook, which separates the large intramolecular coiled coil regions. The 2 Cys residues coordinate one molecule of zinc with the help of the 2 Cys residues of the zinc-hook of another Rad50 molecule, thereby forming a V-shaped homodimer.</text>
</comment>
<comment type="similarity">
    <text evidence="1">Belongs to the SMC family. RAD50 subfamily.</text>
</comment>
<sequence>MIIKNIKMENFRSHRNTSINFSKGITSIIGQNGSGKSSIFQAMNFALFAPRGNNFRIENLMQQGAASFSVELEFEMMGNTYLVKRKRFQHKTDDKLYVNGKLNAESASEINKKIEEILEIDNSVFSNAIYIKQGEIANLIQMTPRDRKEVIGKLLGIEKYEKASEKMNIVKKSYEETLLKLEGELTQEPEILENLEKLKNEVSESEILKEEILKKYENLEKLKLEKNSEILQMEEKFAENNQLKENLKDIISEIKNINLEIQNFKNSLNLVAEESKNISENEENYKKYLELELKIKELNNKLIGHKSNYESYNKLKTIEESLLKELGVLKESLKDNKKNPDELKENLKENDEKILILDKIKEKIKELEFIEKQIYEIKIHKKTVETLFDSVKIYDDSIKTFEELKTKKNSYENLLKEKFDLEKKLQNETDEKTKLISELTDFEKIEEKINLENELKEKYEDLSEKIDKLNEIVLKKESKISEYKNSKAELEKTKDSCHVCQSKITEEKKQELLEKYNSEIQNEQLSTESLKKQLEIILNKKEKMKVKLNEIDSFKLKYGELKEKKNYSLKVEESIIETTEKLNELTGKINEYSSLNDEISLIENKLKNLENDYKNCNYSSQFLTKNDESEFLTKKLELSKIIGDYDSSKIENEKKSLENLKDELKNTIYNLEREINLKKELKNIQNDISSKIGIVECYVKWETEKSDFENKLSECKENYEKYMESLAVLKNYSKTYSVEINNLNEFLNQKIAEKQQFCEKLLETRTEIEKNIQTVNYNPELHENAKRLYENILNEFNDILRTLERISSELKLKNENISYLNEKIQNLSNKKEEKKKIEEFKEYLDKIKREIFSKDGFQKYLREKYIPLIQRHTNQIFQEFELPYSHIQLKDDYSLIVDGLPVETLSGGEQIAVSLALRLGISKAVCNNIECIILDEPTAYLDEDRRKNLLNIFKNIKTINQMAIITHHQELEQIADNIVKVRKIGENSKVSLE</sequence>
<proteinExistence type="inferred from homology"/>
<organism>
    <name type="scientific">Methanococcus maripaludis (strain DSM 14266 / JCM 13030 / NBRC 101832 / S2 / LL)</name>
    <dbReference type="NCBI Taxonomy" id="267377"/>
    <lineage>
        <taxon>Archaea</taxon>
        <taxon>Methanobacteriati</taxon>
        <taxon>Methanobacteriota</taxon>
        <taxon>Methanomada group</taxon>
        <taxon>Methanococci</taxon>
        <taxon>Methanococcales</taxon>
        <taxon>Methanococcaceae</taxon>
        <taxon>Methanococcus</taxon>
    </lineage>
</organism>
<name>RAD50_METMP</name>
<accession>P62134</accession>
<dbReference type="EMBL" id="BX950229">
    <property type="protein sequence ID" value="CAF30897.1"/>
    <property type="molecule type" value="Genomic_DNA"/>
</dbReference>
<dbReference type="RefSeq" id="WP_011171285.1">
    <property type="nucleotide sequence ID" value="NC_005791.1"/>
</dbReference>
<dbReference type="SMR" id="P62134"/>
<dbReference type="STRING" id="267377.MMP1341"/>
<dbReference type="EnsemblBacteria" id="CAF30897">
    <property type="protein sequence ID" value="CAF30897"/>
    <property type="gene ID" value="MMP1341"/>
</dbReference>
<dbReference type="GeneID" id="2762040"/>
<dbReference type="KEGG" id="mmp:MMP1341"/>
<dbReference type="PATRIC" id="fig|267377.15.peg.1376"/>
<dbReference type="eggNOG" id="arCOG00368">
    <property type="taxonomic scope" value="Archaea"/>
</dbReference>
<dbReference type="HOGENOM" id="CLU_004785_0_2_2"/>
<dbReference type="OrthoDB" id="25344at2157"/>
<dbReference type="Proteomes" id="UP000000590">
    <property type="component" value="Chromosome"/>
</dbReference>
<dbReference type="GO" id="GO:0005524">
    <property type="term" value="F:ATP binding"/>
    <property type="evidence" value="ECO:0007669"/>
    <property type="project" value="UniProtKB-UniRule"/>
</dbReference>
<dbReference type="GO" id="GO:0016887">
    <property type="term" value="F:ATP hydrolysis activity"/>
    <property type="evidence" value="ECO:0007669"/>
    <property type="project" value="UniProtKB-UniRule"/>
</dbReference>
<dbReference type="GO" id="GO:0008270">
    <property type="term" value="F:zinc ion binding"/>
    <property type="evidence" value="ECO:0007669"/>
    <property type="project" value="UniProtKB-UniRule"/>
</dbReference>
<dbReference type="GO" id="GO:0006302">
    <property type="term" value="P:double-strand break repair"/>
    <property type="evidence" value="ECO:0007669"/>
    <property type="project" value="UniProtKB-UniRule"/>
</dbReference>
<dbReference type="Gene3D" id="1.10.287.510">
    <property type="entry name" value="Helix hairpin bin"/>
    <property type="match status" value="1"/>
</dbReference>
<dbReference type="Gene3D" id="3.40.50.300">
    <property type="entry name" value="P-loop containing nucleotide triphosphate hydrolases"/>
    <property type="match status" value="2"/>
</dbReference>
<dbReference type="HAMAP" id="MF_00449">
    <property type="entry name" value="RAD50"/>
    <property type="match status" value="1"/>
</dbReference>
<dbReference type="InterPro" id="IPR027417">
    <property type="entry name" value="P-loop_NTPase"/>
</dbReference>
<dbReference type="InterPro" id="IPR038729">
    <property type="entry name" value="Rad50/SbcC_AAA"/>
</dbReference>
<dbReference type="InterPro" id="IPR022982">
    <property type="entry name" value="Rad50_ATPase_archaeal"/>
</dbReference>
<dbReference type="InterPro" id="IPR013134">
    <property type="entry name" value="Zn_hook_RAD50"/>
</dbReference>
<dbReference type="PANTHER" id="PTHR32114">
    <property type="entry name" value="ABC TRANSPORTER ABCH.3"/>
    <property type="match status" value="1"/>
</dbReference>
<dbReference type="PANTHER" id="PTHR32114:SF2">
    <property type="entry name" value="ABC TRANSPORTER ABCH.3"/>
    <property type="match status" value="1"/>
</dbReference>
<dbReference type="Pfam" id="PF13476">
    <property type="entry name" value="AAA_23"/>
    <property type="match status" value="1"/>
</dbReference>
<dbReference type="SUPFAM" id="SSF52540">
    <property type="entry name" value="P-loop containing nucleoside triphosphate hydrolases"/>
    <property type="match status" value="1"/>
</dbReference>
<dbReference type="SUPFAM" id="SSF75712">
    <property type="entry name" value="Rad50 coiled-coil Zn hook"/>
    <property type="match status" value="1"/>
</dbReference>
<dbReference type="PROSITE" id="PS51131">
    <property type="entry name" value="ZN_HOOK"/>
    <property type="match status" value="1"/>
</dbReference>